<organism>
    <name type="scientific">Pasteurella multocida (strain Pm70)</name>
    <dbReference type="NCBI Taxonomy" id="272843"/>
    <lineage>
        <taxon>Bacteria</taxon>
        <taxon>Pseudomonadati</taxon>
        <taxon>Pseudomonadota</taxon>
        <taxon>Gammaproteobacteria</taxon>
        <taxon>Pasteurellales</taxon>
        <taxon>Pasteurellaceae</taxon>
        <taxon>Pasteurella</taxon>
    </lineage>
</organism>
<evidence type="ECO:0000255" key="1">
    <source>
        <dbReference type="HAMAP-Rule" id="MF_01374"/>
    </source>
</evidence>
<comment type="function">
    <text evidence="1">Thiolesterase that catalyzes the hydrolysis of S-D-lactoyl-glutathione to form glutathione and D-lactic acid.</text>
</comment>
<comment type="catalytic activity">
    <reaction evidence="1">
        <text>an S-(2-hydroxyacyl)glutathione + H2O = a 2-hydroxy carboxylate + glutathione + H(+)</text>
        <dbReference type="Rhea" id="RHEA:21864"/>
        <dbReference type="ChEBI" id="CHEBI:15377"/>
        <dbReference type="ChEBI" id="CHEBI:15378"/>
        <dbReference type="ChEBI" id="CHEBI:57925"/>
        <dbReference type="ChEBI" id="CHEBI:58896"/>
        <dbReference type="ChEBI" id="CHEBI:71261"/>
        <dbReference type="EC" id="3.1.2.6"/>
    </reaction>
</comment>
<comment type="cofactor">
    <cofactor evidence="1">
        <name>Zn(2+)</name>
        <dbReference type="ChEBI" id="CHEBI:29105"/>
    </cofactor>
    <text evidence="1">Binds 2 Zn(2+) ions per subunit.</text>
</comment>
<comment type="pathway">
    <text evidence="1">Secondary metabolite metabolism; methylglyoxal degradation; (R)-lactate from methylglyoxal: step 2/2.</text>
</comment>
<comment type="subunit">
    <text evidence="1">Monomer.</text>
</comment>
<comment type="similarity">
    <text evidence="1">Belongs to the metallo-beta-lactamase superfamily. Glyoxalase II family.</text>
</comment>
<reference key="1">
    <citation type="journal article" date="2001" name="Proc. Natl. Acad. Sci. U.S.A.">
        <title>Complete genomic sequence of Pasteurella multocida Pm70.</title>
        <authorList>
            <person name="May B.J."/>
            <person name="Zhang Q."/>
            <person name="Li L.L."/>
            <person name="Paustian M.L."/>
            <person name="Whittam T.S."/>
            <person name="Kapur V."/>
        </authorList>
    </citation>
    <scope>NUCLEOTIDE SEQUENCE [LARGE SCALE GENOMIC DNA]</scope>
    <source>
        <strain>Pm70</strain>
    </source>
</reference>
<feature type="chain" id="PRO_0000309670" description="Hydroxyacylglutathione hydrolase">
    <location>
        <begin position="1"/>
        <end position="233"/>
    </location>
</feature>
<feature type="binding site" evidence="1">
    <location>
        <position position="52"/>
    </location>
    <ligand>
        <name>Zn(2+)</name>
        <dbReference type="ChEBI" id="CHEBI:29105"/>
        <label>1</label>
    </ligand>
</feature>
<feature type="binding site" evidence="1">
    <location>
        <position position="54"/>
    </location>
    <ligand>
        <name>Zn(2+)</name>
        <dbReference type="ChEBI" id="CHEBI:29105"/>
        <label>1</label>
    </ligand>
</feature>
<feature type="binding site" evidence="1">
    <location>
        <position position="56"/>
    </location>
    <ligand>
        <name>Zn(2+)</name>
        <dbReference type="ChEBI" id="CHEBI:29105"/>
        <label>2</label>
    </ligand>
</feature>
<feature type="binding site" evidence="1">
    <location>
        <position position="57"/>
    </location>
    <ligand>
        <name>Zn(2+)</name>
        <dbReference type="ChEBI" id="CHEBI:29105"/>
        <label>2</label>
    </ligand>
</feature>
<feature type="binding site" evidence="1">
    <location>
        <position position="108"/>
    </location>
    <ligand>
        <name>Zn(2+)</name>
        <dbReference type="ChEBI" id="CHEBI:29105"/>
        <label>1</label>
    </ligand>
</feature>
<feature type="binding site" evidence="1">
    <location>
        <position position="125"/>
    </location>
    <ligand>
        <name>Zn(2+)</name>
        <dbReference type="ChEBI" id="CHEBI:29105"/>
        <label>1</label>
    </ligand>
</feature>
<feature type="binding site" evidence="1">
    <location>
        <position position="125"/>
    </location>
    <ligand>
        <name>Zn(2+)</name>
        <dbReference type="ChEBI" id="CHEBI:29105"/>
        <label>2</label>
    </ligand>
</feature>
<feature type="binding site" evidence="1">
    <location>
        <position position="163"/>
    </location>
    <ligand>
        <name>Zn(2+)</name>
        <dbReference type="ChEBI" id="CHEBI:29105"/>
        <label>2</label>
    </ligand>
</feature>
<accession>Q9CMW8</accession>
<protein>
    <recommendedName>
        <fullName evidence="1">Hydroxyacylglutathione hydrolase</fullName>
        <ecNumber evidence="1">3.1.2.6</ecNumber>
    </recommendedName>
    <alternativeName>
        <fullName evidence="1">Glyoxalase II</fullName>
        <shortName evidence="1">Glx II</shortName>
    </alternativeName>
</protein>
<gene>
    <name evidence="1" type="primary">gloB</name>
    <name type="ordered locus">PM0685</name>
</gene>
<keyword id="KW-0378">Hydrolase</keyword>
<keyword id="KW-0479">Metal-binding</keyword>
<keyword id="KW-1185">Reference proteome</keyword>
<keyword id="KW-0862">Zinc</keyword>
<name>GLO2_PASMU</name>
<proteinExistence type="inferred from homology"/>
<sequence>MLVPIPALNDNYIWLYGRANLPIIVIDIPEFTPLLDYVQQHQLNVEALLLTHHHDDHTAGVSLFKQHFPNVKVFGPAETQAKGATEIVNMGILQTEHYHIHVLQTAGHTEQHVSYLVDGHLFCGDSLFSAGCGRVFTGNYQHMFDGLQRLKSLPDDTIVCPAHEYTLANLAFAKYILPENVAIQQHEQWVQKQRVTHQPSLPTTMGREKQINPFLIAQDMETFVAWRKAKDVF</sequence>
<dbReference type="EC" id="3.1.2.6" evidence="1"/>
<dbReference type="EMBL" id="AE004439">
    <property type="protein sequence ID" value="AAK02769.1"/>
    <property type="molecule type" value="Genomic_DNA"/>
</dbReference>
<dbReference type="RefSeq" id="WP_010906791.1">
    <property type="nucleotide sequence ID" value="NC_002663.1"/>
</dbReference>
<dbReference type="SMR" id="Q9CMW8"/>
<dbReference type="STRING" id="272843.PM0685"/>
<dbReference type="EnsemblBacteria" id="AAK02769">
    <property type="protein sequence ID" value="AAK02769"/>
    <property type="gene ID" value="PM0685"/>
</dbReference>
<dbReference type="KEGG" id="pmu:PM0685"/>
<dbReference type="PATRIC" id="fig|272843.6.peg.693"/>
<dbReference type="HOGENOM" id="CLU_030571_4_1_6"/>
<dbReference type="OrthoDB" id="9802248at2"/>
<dbReference type="UniPathway" id="UPA00619">
    <property type="reaction ID" value="UER00676"/>
</dbReference>
<dbReference type="Proteomes" id="UP000000809">
    <property type="component" value="Chromosome"/>
</dbReference>
<dbReference type="GO" id="GO:0004416">
    <property type="term" value="F:hydroxyacylglutathione hydrolase activity"/>
    <property type="evidence" value="ECO:0007669"/>
    <property type="project" value="UniProtKB-UniRule"/>
</dbReference>
<dbReference type="GO" id="GO:0046872">
    <property type="term" value="F:metal ion binding"/>
    <property type="evidence" value="ECO:0007669"/>
    <property type="project" value="UniProtKB-KW"/>
</dbReference>
<dbReference type="GO" id="GO:0019243">
    <property type="term" value="P:methylglyoxal catabolic process to D-lactate via S-lactoyl-glutathione"/>
    <property type="evidence" value="ECO:0007669"/>
    <property type="project" value="InterPro"/>
</dbReference>
<dbReference type="CDD" id="cd07723">
    <property type="entry name" value="hydroxyacylglutathione_hydrolase_MBL-fold"/>
    <property type="match status" value="1"/>
</dbReference>
<dbReference type="Gene3D" id="3.60.15.10">
    <property type="entry name" value="Ribonuclease Z/Hydroxyacylglutathione hydrolase-like"/>
    <property type="match status" value="1"/>
</dbReference>
<dbReference type="HAMAP" id="MF_01374">
    <property type="entry name" value="Glyoxalase_2"/>
    <property type="match status" value="1"/>
</dbReference>
<dbReference type="InterPro" id="IPR035680">
    <property type="entry name" value="Clx_II_MBL"/>
</dbReference>
<dbReference type="InterPro" id="IPR050110">
    <property type="entry name" value="Glyoxalase_II_hydrolase"/>
</dbReference>
<dbReference type="InterPro" id="IPR032282">
    <property type="entry name" value="HAGH_C"/>
</dbReference>
<dbReference type="InterPro" id="IPR017782">
    <property type="entry name" value="Hydroxyacylglutathione_Hdrlase"/>
</dbReference>
<dbReference type="InterPro" id="IPR001279">
    <property type="entry name" value="Metallo-B-lactamas"/>
</dbReference>
<dbReference type="InterPro" id="IPR036866">
    <property type="entry name" value="RibonucZ/Hydroxyglut_hydro"/>
</dbReference>
<dbReference type="NCBIfam" id="TIGR03413">
    <property type="entry name" value="GSH_gloB"/>
    <property type="match status" value="1"/>
</dbReference>
<dbReference type="PANTHER" id="PTHR43705">
    <property type="entry name" value="HYDROXYACYLGLUTATHIONE HYDROLASE"/>
    <property type="match status" value="1"/>
</dbReference>
<dbReference type="PANTHER" id="PTHR43705:SF1">
    <property type="entry name" value="HYDROXYACYLGLUTATHIONE HYDROLASE GLOB"/>
    <property type="match status" value="1"/>
</dbReference>
<dbReference type="Pfam" id="PF16123">
    <property type="entry name" value="HAGH_C"/>
    <property type="match status" value="1"/>
</dbReference>
<dbReference type="Pfam" id="PF00753">
    <property type="entry name" value="Lactamase_B"/>
    <property type="match status" value="2"/>
</dbReference>
<dbReference type="SMART" id="SM00849">
    <property type="entry name" value="Lactamase_B"/>
    <property type="match status" value="1"/>
</dbReference>
<dbReference type="SUPFAM" id="SSF56281">
    <property type="entry name" value="Metallo-hydrolase/oxidoreductase"/>
    <property type="match status" value="1"/>
</dbReference>